<name>QUEA_BACC0</name>
<gene>
    <name evidence="1" type="primary">queA</name>
    <name type="ordered locus">BCAH820_4498</name>
</gene>
<feature type="chain" id="PRO_1000117523" description="S-adenosylmethionine:tRNA ribosyltransferase-isomerase">
    <location>
        <begin position="1"/>
        <end position="350"/>
    </location>
</feature>
<organism>
    <name type="scientific">Bacillus cereus (strain AH820)</name>
    <dbReference type="NCBI Taxonomy" id="405535"/>
    <lineage>
        <taxon>Bacteria</taxon>
        <taxon>Bacillati</taxon>
        <taxon>Bacillota</taxon>
        <taxon>Bacilli</taxon>
        <taxon>Bacillales</taxon>
        <taxon>Bacillaceae</taxon>
        <taxon>Bacillus</taxon>
        <taxon>Bacillus cereus group</taxon>
    </lineage>
</organism>
<keyword id="KW-0963">Cytoplasm</keyword>
<keyword id="KW-0671">Queuosine biosynthesis</keyword>
<keyword id="KW-0949">S-adenosyl-L-methionine</keyword>
<keyword id="KW-0808">Transferase</keyword>
<evidence type="ECO:0000255" key="1">
    <source>
        <dbReference type="HAMAP-Rule" id="MF_00113"/>
    </source>
</evidence>
<accession>B7JQ04</accession>
<proteinExistence type="inferred from homology"/>
<comment type="function">
    <text evidence="1">Transfers and isomerizes the ribose moiety from AdoMet to the 7-aminomethyl group of 7-deazaguanine (preQ1-tRNA) to give epoxyqueuosine (oQ-tRNA).</text>
</comment>
<comment type="catalytic activity">
    <reaction evidence="1">
        <text>7-aminomethyl-7-carbaguanosine(34) in tRNA + S-adenosyl-L-methionine = epoxyqueuosine(34) in tRNA + adenine + L-methionine + 2 H(+)</text>
        <dbReference type="Rhea" id="RHEA:32155"/>
        <dbReference type="Rhea" id="RHEA-COMP:10342"/>
        <dbReference type="Rhea" id="RHEA-COMP:18582"/>
        <dbReference type="ChEBI" id="CHEBI:15378"/>
        <dbReference type="ChEBI" id="CHEBI:16708"/>
        <dbReference type="ChEBI" id="CHEBI:57844"/>
        <dbReference type="ChEBI" id="CHEBI:59789"/>
        <dbReference type="ChEBI" id="CHEBI:82833"/>
        <dbReference type="ChEBI" id="CHEBI:194443"/>
        <dbReference type="EC" id="2.4.99.17"/>
    </reaction>
</comment>
<comment type="pathway">
    <text evidence="1">tRNA modification; tRNA-queuosine biosynthesis.</text>
</comment>
<comment type="subunit">
    <text evidence="1">Monomer.</text>
</comment>
<comment type="subcellular location">
    <subcellularLocation>
        <location evidence="1">Cytoplasm</location>
    </subcellularLocation>
</comment>
<comment type="similarity">
    <text evidence="1">Belongs to the QueA family.</text>
</comment>
<dbReference type="EC" id="2.4.99.17" evidence="1"/>
<dbReference type="EMBL" id="CP001283">
    <property type="protein sequence ID" value="ACK92464.1"/>
    <property type="molecule type" value="Genomic_DNA"/>
</dbReference>
<dbReference type="RefSeq" id="WP_000354028.1">
    <property type="nucleotide sequence ID" value="NC_011773.1"/>
</dbReference>
<dbReference type="SMR" id="B7JQ04"/>
<dbReference type="GeneID" id="93006683"/>
<dbReference type="KEGG" id="bcu:BCAH820_4498"/>
<dbReference type="HOGENOM" id="CLU_039110_1_0_9"/>
<dbReference type="UniPathway" id="UPA00392"/>
<dbReference type="Proteomes" id="UP000001363">
    <property type="component" value="Chromosome"/>
</dbReference>
<dbReference type="GO" id="GO:0005737">
    <property type="term" value="C:cytoplasm"/>
    <property type="evidence" value="ECO:0007669"/>
    <property type="project" value="UniProtKB-SubCell"/>
</dbReference>
<dbReference type="GO" id="GO:0051075">
    <property type="term" value="F:S-adenosylmethionine:tRNA ribosyltransferase-isomerase activity"/>
    <property type="evidence" value="ECO:0007669"/>
    <property type="project" value="UniProtKB-EC"/>
</dbReference>
<dbReference type="GO" id="GO:0008616">
    <property type="term" value="P:queuosine biosynthetic process"/>
    <property type="evidence" value="ECO:0007669"/>
    <property type="project" value="UniProtKB-UniRule"/>
</dbReference>
<dbReference type="GO" id="GO:0002099">
    <property type="term" value="P:tRNA wobble guanine modification"/>
    <property type="evidence" value="ECO:0007669"/>
    <property type="project" value="TreeGrafter"/>
</dbReference>
<dbReference type="FunFam" id="2.40.10.240:FF:000002">
    <property type="entry name" value="S-adenosylmethionine:tRNA ribosyltransferase-isomerase"/>
    <property type="match status" value="1"/>
</dbReference>
<dbReference type="FunFam" id="3.40.1780.10:FF:000001">
    <property type="entry name" value="S-adenosylmethionine:tRNA ribosyltransferase-isomerase"/>
    <property type="match status" value="1"/>
</dbReference>
<dbReference type="Gene3D" id="2.40.10.240">
    <property type="entry name" value="QueA-like"/>
    <property type="match status" value="1"/>
</dbReference>
<dbReference type="Gene3D" id="3.40.1780.10">
    <property type="entry name" value="QueA-like"/>
    <property type="match status" value="1"/>
</dbReference>
<dbReference type="HAMAP" id="MF_00113">
    <property type="entry name" value="QueA"/>
    <property type="match status" value="1"/>
</dbReference>
<dbReference type="InterPro" id="IPR003699">
    <property type="entry name" value="QueA"/>
</dbReference>
<dbReference type="InterPro" id="IPR042118">
    <property type="entry name" value="QueA_dom1"/>
</dbReference>
<dbReference type="InterPro" id="IPR042119">
    <property type="entry name" value="QueA_dom2"/>
</dbReference>
<dbReference type="InterPro" id="IPR036100">
    <property type="entry name" value="QueA_sf"/>
</dbReference>
<dbReference type="NCBIfam" id="NF001140">
    <property type="entry name" value="PRK00147.1"/>
    <property type="match status" value="1"/>
</dbReference>
<dbReference type="NCBIfam" id="TIGR00113">
    <property type="entry name" value="queA"/>
    <property type="match status" value="1"/>
</dbReference>
<dbReference type="PANTHER" id="PTHR30307">
    <property type="entry name" value="S-ADENOSYLMETHIONINE:TRNA RIBOSYLTRANSFERASE-ISOMERASE"/>
    <property type="match status" value="1"/>
</dbReference>
<dbReference type="PANTHER" id="PTHR30307:SF0">
    <property type="entry name" value="S-ADENOSYLMETHIONINE:TRNA RIBOSYLTRANSFERASE-ISOMERASE"/>
    <property type="match status" value="1"/>
</dbReference>
<dbReference type="Pfam" id="PF02547">
    <property type="entry name" value="Queuosine_synth"/>
    <property type="match status" value="1"/>
</dbReference>
<dbReference type="SUPFAM" id="SSF111337">
    <property type="entry name" value="QueA-like"/>
    <property type="match status" value="1"/>
</dbReference>
<protein>
    <recommendedName>
        <fullName evidence="1">S-adenosylmethionine:tRNA ribosyltransferase-isomerase</fullName>
        <ecNumber evidence="1">2.4.99.17</ecNumber>
    </recommendedName>
    <alternativeName>
        <fullName evidence="1">Queuosine biosynthesis protein QueA</fullName>
    </alternativeName>
</protein>
<sequence>MDINLFDFHLPEELIAQVPLEERETSRLMVLDRETGDIEHKHFTDILSYLHEGDCLVLNETKVMPARLHGVKEDTGAHIEVLLLKQEEGDKWETLVKPAKRVKEGTVISFGEGKLKATCTGTADQGGRQLEFSYDGIFYEILDELGEMPLPPYIKETLEDRDRYQTVYAKEIGSAAAPTAGLHFTEELLEKLKQKGVELAFITLHVGLGTFRPVSADTIEEHHMHAEYYHMSEETAALLNRVKENGGRIITVGTTSTRTLETIATDHDGKLCAASGWTDIFMYPGYEFKAIDGLITNFHLPKSTLIMLVSAFANRDNVLHAYNEAVKEKYRFFSFGDAMFVASHAKMGNK</sequence>
<reference key="1">
    <citation type="submission" date="2008-10" db="EMBL/GenBank/DDBJ databases">
        <title>Genome sequence of Bacillus cereus AH820.</title>
        <authorList>
            <person name="Dodson R.J."/>
            <person name="Durkin A.S."/>
            <person name="Rosovitz M.J."/>
            <person name="Rasko D.A."/>
            <person name="Hoffmaster A."/>
            <person name="Ravel J."/>
            <person name="Sutton G."/>
        </authorList>
    </citation>
    <scope>NUCLEOTIDE SEQUENCE [LARGE SCALE GENOMIC DNA]</scope>
    <source>
        <strain>AH820</strain>
    </source>
</reference>